<organism>
    <name type="scientific">Acidovorax sp. (strain JS42)</name>
    <dbReference type="NCBI Taxonomy" id="232721"/>
    <lineage>
        <taxon>Bacteria</taxon>
        <taxon>Pseudomonadati</taxon>
        <taxon>Pseudomonadota</taxon>
        <taxon>Betaproteobacteria</taxon>
        <taxon>Burkholderiales</taxon>
        <taxon>Comamonadaceae</taxon>
        <taxon>Acidovorax</taxon>
    </lineage>
</organism>
<accession>A1WB80</accession>
<keyword id="KW-0687">Ribonucleoprotein</keyword>
<keyword id="KW-0689">Ribosomal protein</keyword>
<comment type="similarity">
    <text evidence="1">Belongs to the bacterial ribosomal protein bL33 family.</text>
</comment>
<gene>
    <name evidence="1" type="primary">rpmG</name>
    <name type="ordered locus">Ajs_3385</name>
</gene>
<evidence type="ECO:0000255" key="1">
    <source>
        <dbReference type="HAMAP-Rule" id="MF_00294"/>
    </source>
</evidence>
<evidence type="ECO:0000305" key="2"/>
<feature type="chain" id="PRO_1000004134" description="Large ribosomal subunit protein bL33">
    <location>
        <begin position="1"/>
        <end position="56"/>
    </location>
</feature>
<sequence length="56" mass="6442">MASKGGREKIKLVSTAETGHFYTTTKNKKTMPEKMSIIKFDPKARKHVEYKEAKLK</sequence>
<dbReference type="EMBL" id="CP000539">
    <property type="protein sequence ID" value="ABM43505.1"/>
    <property type="molecule type" value="Genomic_DNA"/>
</dbReference>
<dbReference type="SMR" id="A1WB80"/>
<dbReference type="STRING" id="232721.Ajs_3385"/>
<dbReference type="KEGG" id="ajs:Ajs_3385"/>
<dbReference type="eggNOG" id="COG0267">
    <property type="taxonomic scope" value="Bacteria"/>
</dbReference>
<dbReference type="HOGENOM" id="CLU_190949_1_1_4"/>
<dbReference type="Proteomes" id="UP000000645">
    <property type="component" value="Chromosome"/>
</dbReference>
<dbReference type="GO" id="GO:0022625">
    <property type="term" value="C:cytosolic large ribosomal subunit"/>
    <property type="evidence" value="ECO:0007669"/>
    <property type="project" value="TreeGrafter"/>
</dbReference>
<dbReference type="GO" id="GO:0003735">
    <property type="term" value="F:structural constituent of ribosome"/>
    <property type="evidence" value="ECO:0007669"/>
    <property type="project" value="InterPro"/>
</dbReference>
<dbReference type="GO" id="GO:0006412">
    <property type="term" value="P:translation"/>
    <property type="evidence" value="ECO:0007669"/>
    <property type="project" value="UniProtKB-UniRule"/>
</dbReference>
<dbReference type="Gene3D" id="2.20.28.120">
    <property type="entry name" value="Ribosomal protein L33"/>
    <property type="match status" value="1"/>
</dbReference>
<dbReference type="HAMAP" id="MF_00294">
    <property type="entry name" value="Ribosomal_bL33"/>
    <property type="match status" value="1"/>
</dbReference>
<dbReference type="InterPro" id="IPR001705">
    <property type="entry name" value="Ribosomal_bL33"/>
</dbReference>
<dbReference type="InterPro" id="IPR018264">
    <property type="entry name" value="Ribosomal_bL33_CS"/>
</dbReference>
<dbReference type="InterPro" id="IPR038584">
    <property type="entry name" value="Ribosomal_bL33_sf"/>
</dbReference>
<dbReference type="InterPro" id="IPR011332">
    <property type="entry name" value="Ribosomal_zn-bd"/>
</dbReference>
<dbReference type="NCBIfam" id="NF001860">
    <property type="entry name" value="PRK00595.1"/>
    <property type="match status" value="1"/>
</dbReference>
<dbReference type="NCBIfam" id="TIGR01023">
    <property type="entry name" value="rpmG_bact"/>
    <property type="match status" value="1"/>
</dbReference>
<dbReference type="PANTHER" id="PTHR15238">
    <property type="entry name" value="54S RIBOSOMAL PROTEIN L39, MITOCHONDRIAL"/>
    <property type="match status" value="1"/>
</dbReference>
<dbReference type="PANTHER" id="PTHR15238:SF1">
    <property type="entry name" value="LARGE RIBOSOMAL SUBUNIT PROTEIN BL33M"/>
    <property type="match status" value="1"/>
</dbReference>
<dbReference type="Pfam" id="PF00471">
    <property type="entry name" value="Ribosomal_L33"/>
    <property type="match status" value="1"/>
</dbReference>
<dbReference type="SUPFAM" id="SSF57829">
    <property type="entry name" value="Zn-binding ribosomal proteins"/>
    <property type="match status" value="1"/>
</dbReference>
<dbReference type="PROSITE" id="PS00582">
    <property type="entry name" value="RIBOSOMAL_L33"/>
    <property type="match status" value="1"/>
</dbReference>
<proteinExistence type="inferred from homology"/>
<protein>
    <recommendedName>
        <fullName evidence="1">Large ribosomal subunit protein bL33</fullName>
    </recommendedName>
    <alternativeName>
        <fullName evidence="2">50S ribosomal protein L33</fullName>
    </alternativeName>
</protein>
<name>RL33_ACISJ</name>
<reference key="1">
    <citation type="submission" date="2006-12" db="EMBL/GenBank/DDBJ databases">
        <title>Complete sequence of chromosome 1 of Acidovorax sp. JS42.</title>
        <authorList>
            <person name="Copeland A."/>
            <person name="Lucas S."/>
            <person name="Lapidus A."/>
            <person name="Barry K."/>
            <person name="Detter J.C."/>
            <person name="Glavina del Rio T."/>
            <person name="Dalin E."/>
            <person name="Tice H."/>
            <person name="Pitluck S."/>
            <person name="Chertkov O."/>
            <person name="Brettin T."/>
            <person name="Bruce D."/>
            <person name="Han C."/>
            <person name="Tapia R."/>
            <person name="Gilna P."/>
            <person name="Schmutz J."/>
            <person name="Larimer F."/>
            <person name="Land M."/>
            <person name="Hauser L."/>
            <person name="Kyrpides N."/>
            <person name="Kim E."/>
            <person name="Stahl D."/>
            <person name="Richardson P."/>
        </authorList>
    </citation>
    <scope>NUCLEOTIDE SEQUENCE [LARGE SCALE GENOMIC DNA]</scope>
    <source>
        <strain>JS42</strain>
    </source>
</reference>